<comment type="function">
    <text evidence="1">Catalyzes a salvage reaction resulting in the formation of AMP, that is energically less costly than de novo synthesis.</text>
</comment>
<comment type="catalytic activity">
    <reaction evidence="1">
        <text>AMP + diphosphate = 5-phospho-alpha-D-ribose 1-diphosphate + adenine</text>
        <dbReference type="Rhea" id="RHEA:16609"/>
        <dbReference type="ChEBI" id="CHEBI:16708"/>
        <dbReference type="ChEBI" id="CHEBI:33019"/>
        <dbReference type="ChEBI" id="CHEBI:58017"/>
        <dbReference type="ChEBI" id="CHEBI:456215"/>
        <dbReference type="EC" id="2.4.2.7"/>
    </reaction>
</comment>
<comment type="pathway">
    <text evidence="1">Purine metabolism; AMP biosynthesis via salvage pathway; AMP from adenine: step 1/1.</text>
</comment>
<comment type="subunit">
    <text evidence="1">Homodimer.</text>
</comment>
<comment type="subcellular location">
    <subcellularLocation>
        <location evidence="1">Cytoplasm</location>
    </subcellularLocation>
</comment>
<comment type="similarity">
    <text evidence="1">Belongs to the purine/pyrimidine phosphoribosyltransferase family.</text>
</comment>
<protein>
    <recommendedName>
        <fullName evidence="1">Adenine phosphoribosyltransferase</fullName>
        <shortName evidence="1">APRT</shortName>
        <ecNumber evidence="1">2.4.2.7</ecNumber>
    </recommendedName>
</protein>
<gene>
    <name evidence="1" type="primary">apt</name>
    <name type="ordered locus">DNO_0414</name>
</gene>
<keyword id="KW-0963">Cytoplasm</keyword>
<keyword id="KW-0328">Glycosyltransferase</keyword>
<keyword id="KW-0660">Purine salvage</keyword>
<keyword id="KW-1185">Reference proteome</keyword>
<keyword id="KW-0808">Transferase</keyword>
<evidence type="ECO:0000255" key="1">
    <source>
        <dbReference type="HAMAP-Rule" id="MF_00004"/>
    </source>
</evidence>
<feature type="chain" id="PRO_0000321360" description="Adenine phosphoribosyltransferase">
    <location>
        <begin position="1"/>
        <end position="174"/>
    </location>
</feature>
<proteinExistence type="inferred from homology"/>
<reference key="1">
    <citation type="journal article" date="2007" name="Nat. Biotechnol.">
        <title>Genome sequence and identification of candidate vaccine antigens from the animal pathogen Dichelobacter nodosus.</title>
        <authorList>
            <person name="Myers G.S.A."/>
            <person name="Parker D."/>
            <person name="Al-Hasani K."/>
            <person name="Kennan R.M."/>
            <person name="Seemann T."/>
            <person name="Ren Q."/>
            <person name="Badger J.H."/>
            <person name="Selengut J.D."/>
            <person name="Deboy R.T."/>
            <person name="Tettelin H."/>
            <person name="Boyce J.D."/>
            <person name="McCarl V.P."/>
            <person name="Han X."/>
            <person name="Nelson W.C."/>
            <person name="Madupu R."/>
            <person name="Mohamoud Y."/>
            <person name="Holley T."/>
            <person name="Fedorova N."/>
            <person name="Khouri H."/>
            <person name="Bottomley S.P."/>
            <person name="Whittington R.J."/>
            <person name="Adler B."/>
            <person name="Songer J.G."/>
            <person name="Rood J.I."/>
            <person name="Paulsen I.T."/>
        </authorList>
    </citation>
    <scope>NUCLEOTIDE SEQUENCE [LARGE SCALE GENOMIC DNA]</scope>
    <source>
        <strain>VCS1703A</strain>
    </source>
</reference>
<organism>
    <name type="scientific">Dichelobacter nodosus (strain VCS1703A)</name>
    <dbReference type="NCBI Taxonomy" id="246195"/>
    <lineage>
        <taxon>Bacteria</taxon>
        <taxon>Pseudomonadati</taxon>
        <taxon>Pseudomonadota</taxon>
        <taxon>Gammaproteobacteria</taxon>
        <taxon>Cardiobacteriales</taxon>
        <taxon>Cardiobacteriaceae</taxon>
        <taxon>Dichelobacter</taxon>
    </lineage>
</organism>
<sequence length="174" mass="19122">MNMDWKNLIINIPDYPKAGINFKDITPLLANGAGFKAAIEEMAMICERQNAIPDVLACPEARGFIFAAALAHRLGIGFIPLRKPHKLPREVAHINYGLEYGEDCLEVHKQDIKKGMRIMMVDDVLATGGTMHACMNLLQSLGAEIIGAMFLLELTALKGREKLGTAAVYSLIQD</sequence>
<accession>A5EVW7</accession>
<name>APT_DICNV</name>
<dbReference type="EC" id="2.4.2.7" evidence="1"/>
<dbReference type="EMBL" id="CP000513">
    <property type="protein sequence ID" value="ABQ13670.1"/>
    <property type="molecule type" value="Genomic_DNA"/>
</dbReference>
<dbReference type="RefSeq" id="WP_012030752.1">
    <property type="nucleotide sequence ID" value="NC_009446.1"/>
</dbReference>
<dbReference type="SMR" id="A5EVW7"/>
<dbReference type="STRING" id="246195.DNO_0414"/>
<dbReference type="KEGG" id="dno:DNO_0414"/>
<dbReference type="eggNOG" id="COG0503">
    <property type="taxonomic scope" value="Bacteria"/>
</dbReference>
<dbReference type="HOGENOM" id="CLU_063339_3_0_6"/>
<dbReference type="UniPathway" id="UPA00588">
    <property type="reaction ID" value="UER00646"/>
</dbReference>
<dbReference type="Proteomes" id="UP000000248">
    <property type="component" value="Chromosome"/>
</dbReference>
<dbReference type="GO" id="GO:0005737">
    <property type="term" value="C:cytoplasm"/>
    <property type="evidence" value="ECO:0007669"/>
    <property type="project" value="UniProtKB-SubCell"/>
</dbReference>
<dbReference type="GO" id="GO:0002055">
    <property type="term" value="F:adenine binding"/>
    <property type="evidence" value="ECO:0007669"/>
    <property type="project" value="TreeGrafter"/>
</dbReference>
<dbReference type="GO" id="GO:0003999">
    <property type="term" value="F:adenine phosphoribosyltransferase activity"/>
    <property type="evidence" value="ECO:0007669"/>
    <property type="project" value="UniProtKB-UniRule"/>
</dbReference>
<dbReference type="GO" id="GO:0016208">
    <property type="term" value="F:AMP binding"/>
    <property type="evidence" value="ECO:0007669"/>
    <property type="project" value="TreeGrafter"/>
</dbReference>
<dbReference type="GO" id="GO:0006168">
    <property type="term" value="P:adenine salvage"/>
    <property type="evidence" value="ECO:0007669"/>
    <property type="project" value="InterPro"/>
</dbReference>
<dbReference type="GO" id="GO:0044209">
    <property type="term" value="P:AMP salvage"/>
    <property type="evidence" value="ECO:0007669"/>
    <property type="project" value="UniProtKB-UniRule"/>
</dbReference>
<dbReference type="GO" id="GO:0006166">
    <property type="term" value="P:purine ribonucleoside salvage"/>
    <property type="evidence" value="ECO:0007669"/>
    <property type="project" value="UniProtKB-KW"/>
</dbReference>
<dbReference type="CDD" id="cd06223">
    <property type="entry name" value="PRTases_typeI"/>
    <property type="match status" value="1"/>
</dbReference>
<dbReference type="FunFam" id="3.40.50.2020:FF:000004">
    <property type="entry name" value="Adenine phosphoribosyltransferase"/>
    <property type="match status" value="1"/>
</dbReference>
<dbReference type="Gene3D" id="3.40.50.2020">
    <property type="match status" value="1"/>
</dbReference>
<dbReference type="HAMAP" id="MF_00004">
    <property type="entry name" value="Aden_phosphoribosyltr"/>
    <property type="match status" value="1"/>
</dbReference>
<dbReference type="InterPro" id="IPR005764">
    <property type="entry name" value="Ade_phspho_trans"/>
</dbReference>
<dbReference type="InterPro" id="IPR000836">
    <property type="entry name" value="PRibTrfase_dom"/>
</dbReference>
<dbReference type="InterPro" id="IPR029057">
    <property type="entry name" value="PRTase-like"/>
</dbReference>
<dbReference type="InterPro" id="IPR050054">
    <property type="entry name" value="UPRTase/APRTase"/>
</dbReference>
<dbReference type="NCBIfam" id="TIGR01090">
    <property type="entry name" value="apt"/>
    <property type="match status" value="1"/>
</dbReference>
<dbReference type="NCBIfam" id="NF002634">
    <property type="entry name" value="PRK02304.1-3"/>
    <property type="match status" value="1"/>
</dbReference>
<dbReference type="NCBIfam" id="NF002636">
    <property type="entry name" value="PRK02304.1-5"/>
    <property type="match status" value="1"/>
</dbReference>
<dbReference type="PANTHER" id="PTHR32315">
    <property type="entry name" value="ADENINE PHOSPHORIBOSYLTRANSFERASE"/>
    <property type="match status" value="1"/>
</dbReference>
<dbReference type="PANTHER" id="PTHR32315:SF3">
    <property type="entry name" value="ADENINE PHOSPHORIBOSYLTRANSFERASE"/>
    <property type="match status" value="1"/>
</dbReference>
<dbReference type="Pfam" id="PF00156">
    <property type="entry name" value="Pribosyltran"/>
    <property type="match status" value="1"/>
</dbReference>
<dbReference type="SUPFAM" id="SSF53271">
    <property type="entry name" value="PRTase-like"/>
    <property type="match status" value="1"/>
</dbReference>
<dbReference type="PROSITE" id="PS00103">
    <property type="entry name" value="PUR_PYR_PR_TRANSFER"/>
    <property type="match status" value="1"/>
</dbReference>